<evidence type="ECO:0000255" key="1">
    <source>
        <dbReference type="HAMAP-Rule" id="MF_00122"/>
    </source>
</evidence>
<comment type="function">
    <text evidence="1">Allows the formation of correctly charged Asn-tRNA(Asn) or Gln-tRNA(Gln) through the transamidation of misacylated Asp-tRNA(Asn) or Glu-tRNA(Gln) in organisms which lack either or both of asparaginyl-tRNA or glutaminyl-tRNA synthetases. The reaction takes place in the presence of glutamine and ATP through an activated phospho-Asp-tRNA(Asn) or phospho-Glu-tRNA(Gln).</text>
</comment>
<comment type="catalytic activity">
    <reaction evidence="1">
        <text>L-glutamyl-tRNA(Gln) + L-glutamine + ATP + H2O = L-glutaminyl-tRNA(Gln) + L-glutamate + ADP + phosphate + H(+)</text>
        <dbReference type="Rhea" id="RHEA:17521"/>
        <dbReference type="Rhea" id="RHEA-COMP:9681"/>
        <dbReference type="Rhea" id="RHEA-COMP:9684"/>
        <dbReference type="ChEBI" id="CHEBI:15377"/>
        <dbReference type="ChEBI" id="CHEBI:15378"/>
        <dbReference type="ChEBI" id="CHEBI:29985"/>
        <dbReference type="ChEBI" id="CHEBI:30616"/>
        <dbReference type="ChEBI" id="CHEBI:43474"/>
        <dbReference type="ChEBI" id="CHEBI:58359"/>
        <dbReference type="ChEBI" id="CHEBI:78520"/>
        <dbReference type="ChEBI" id="CHEBI:78521"/>
        <dbReference type="ChEBI" id="CHEBI:456216"/>
    </reaction>
</comment>
<comment type="catalytic activity">
    <reaction evidence="1">
        <text>L-aspartyl-tRNA(Asn) + L-glutamine + ATP + H2O = L-asparaginyl-tRNA(Asn) + L-glutamate + ADP + phosphate + 2 H(+)</text>
        <dbReference type="Rhea" id="RHEA:14513"/>
        <dbReference type="Rhea" id="RHEA-COMP:9674"/>
        <dbReference type="Rhea" id="RHEA-COMP:9677"/>
        <dbReference type="ChEBI" id="CHEBI:15377"/>
        <dbReference type="ChEBI" id="CHEBI:15378"/>
        <dbReference type="ChEBI" id="CHEBI:29985"/>
        <dbReference type="ChEBI" id="CHEBI:30616"/>
        <dbReference type="ChEBI" id="CHEBI:43474"/>
        <dbReference type="ChEBI" id="CHEBI:58359"/>
        <dbReference type="ChEBI" id="CHEBI:78515"/>
        <dbReference type="ChEBI" id="CHEBI:78516"/>
        <dbReference type="ChEBI" id="CHEBI:456216"/>
    </reaction>
</comment>
<comment type="subunit">
    <text evidence="1">Heterotrimer of A, B and C subunits.</text>
</comment>
<comment type="similarity">
    <text evidence="1">Belongs to the GatC family.</text>
</comment>
<keyword id="KW-0067">ATP-binding</keyword>
<keyword id="KW-0436">Ligase</keyword>
<keyword id="KW-0547">Nucleotide-binding</keyword>
<keyword id="KW-0648">Protein biosynthesis</keyword>
<keyword id="KW-1185">Reference proteome</keyword>
<proteinExistence type="inferred from homology"/>
<reference key="1">
    <citation type="journal article" date="2015" name="Genome Announc.">
        <title>Complete genome sequence of Anaeromyxobacter sp. Fw109-5, an anaerobic, metal-reducing bacterium isolated from a contaminated subsurface environment.</title>
        <authorList>
            <person name="Hwang C."/>
            <person name="Copeland A."/>
            <person name="Lucas S."/>
            <person name="Lapidus A."/>
            <person name="Barry K."/>
            <person name="Glavina Del Rio T."/>
            <person name="Dalin E."/>
            <person name="Tice H."/>
            <person name="Pitluck S."/>
            <person name="Sims D."/>
            <person name="Brettin T."/>
            <person name="Bruce D.C."/>
            <person name="Detter J.C."/>
            <person name="Han C.S."/>
            <person name="Schmutz J."/>
            <person name="Larimer F.W."/>
            <person name="Land M.L."/>
            <person name="Hauser L.J."/>
            <person name="Kyrpides N."/>
            <person name="Lykidis A."/>
            <person name="Richardson P."/>
            <person name="Belieav A."/>
            <person name="Sanford R.A."/>
            <person name="Loeffler F.E."/>
            <person name="Fields M.W."/>
        </authorList>
    </citation>
    <scope>NUCLEOTIDE SEQUENCE [LARGE SCALE GENOMIC DNA]</scope>
    <source>
        <strain>Fw109-5</strain>
    </source>
</reference>
<accession>A7HIH1</accession>
<sequence length="95" mass="10309">MSLTLDEVRRIAALARLRLSPEEERTFAGQLSAILDHVAQLAELDVSGVEPMTHALAEGVPSRPDEVRPGLPPEEALANAPAREGTFFVVPRIIE</sequence>
<dbReference type="EC" id="6.3.5.-" evidence="1"/>
<dbReference type="EMBL" id="CP000769">
    <property type="protein sequence ID" value="ABS28517.1"/>
    <property type="molecule type" value="Genomic_DNA"/>
</dbReference>
<dbReference type="RefSeq" id="WP_012099162.1">
    <property type="nucleotide sequence ID" value="NC_009675.1"/>
</dbReference>
<dbReference type="SMR" id="A7HIH1"/>
<dbReference type="STRING" id="404589.Anae109_4339"/>
<dbReference type="KEGG" id="afw:Anae109_4339"/>
<dbReference type="eggNOG" id="COG0721">
    <property type="taxonomic scope" value="Bacteria"/>
</dbReference>
<dbReference type="HOGENOM" id="CLU_105899_6_1_7"/>
<dbReference type="OrthoDB" id="9813938at2"/>
<dbReference type="Proteomes" id="UP000006382">
    <property type="component" value="Chromosome"/>
</dbReference>
<dbReference type="GO" id="GO:0050566">
    <property type="term" value="F:asparaginyl-tRNA synthase (glutamine-hydrolyzing) activity"/>
    <property type="evidence" value="ECO:0007669"/>
    <property type="project" value="RHEA"/>
</dbReference>
<dbReference type="GO" id="GO:0005524">
    <property type="term" value="F:ATP binding"/>
    <property type="evidence" value="ECO:0007669"/>
    <property type="project" value="UniProtKB-KW"/>
</dbReference>
<dbReference type="GO" id="GO:0050567">
    <property type="term" value="F:glutaminyl-tRNA synthase (glutamine-hydrolyzing) activity"/>
    <property type="evidence" value="ECO:0007669"/>
    <property type="project" value="UniProtKB-UniRule"/>
</dbReference>
<dbReference type="GO" id="GO:0070681">
    <property type="term" value="P:glutaminyl-tRNAGln biosynthesis via transamidation"/>
    <property type="evidence" value="ECO:0007669"/>
    <property type="project" value="TreeGrafter"/>
</dbReference>
<dbReference type="GO" id="GO:0006450">
    <property type="term" value="P:regulation of translational fidelity"/>
    <property type="evidence" value="ECO:0007669"/>
    <property type="project" value="InterPro"/>
</dbReference>
<dbReference type="GO" id="GO:0006412">
    <property type="term" value="P:translation"/>
    <property type="evidence" value="ECO:0007669"/>
    <property type="project" value="UniProtKB-UniRule"/>
</dbReference>
<dbReference type="Gene3D" id="1.10.20.60">
    <property type="entry name" value="Glu-tRNAGln amidotransferase C subunit, N-terminal domain"/>
    <property type="match status" value="1"/>
</dbReference>
<dbReference type="HAMAP" id="MF_00122">
    <property type="entry name" value="GatC"/>
    <property type="match status" value="1"/>
</dbReference>
<dbReference type="InterPro" id="IPR036113">
    <property type="entry name" value="Asp/Glu-ADT_sf_sub_c"/>
</dbReference>
<dbReference type="InterPro" id="IPR003837">
    <property type="entry name" value="GatC"/>
</dbReference>
<dbReference type="NCBIfam" id="TIGR00135">
    <property type="entry name" value="gatC"/>
    <property type="match status" value="1"/>
</dbReference>
<dbReference type="PANTHER" id="PTHR15004">
    <property type="entry name" value="GLUTAMYL-TRNA(GLN) AMIDOTRANSFERASE SUBUNIT C, MITOCHONDRIAL"/>
    <property type="match status" value="1"/>
</dbReference>
<dbReference type="PANTHER" id="PTHR15004:SF0">
    <property type="entry name" value="GLUTAMYL-TRNA(GLN) AMIDOTRANSFERASE SUBUNIT C, MITOCHONDRIAL"/>
    <property type="match status" value="1"/>
</dbReference>
<dbReference type="Pfam" id="PF02686">
    <property type="entry name" value="GatC"/>
    <property type="match status" value="1"/>
</dbReference>
<dbReference type="SUPFAM" id="SSF141000">
    <property type="entry name" value="Glu-tRNAGln amidotransferase C subunit"/>
    <property type="match status" value="1"/>
</dbReference>
<protein>
    <recommendedName>
        <fullName evidence="1">Aspartyl/glutamyl-tRNA(Asn/Gln) amidotransferase subunit C</fullName>
        <shortName evidence="1">Asp/Glu-ADT subunit C</shortName>
        <ecNumber evidence="1">6.3.5.-</ecNumber>
    </recommendedName>
</protein>
<name>GATC_ANADF</name>
<organism>
    <name type="scientific">Anaeromyxobacter sp. (strain Fw109-5)</name>
    <dbReference type="NCBI Taxonomy" id="404589"/>
    <lineage>
        <taxon>Bacteria</taxon>
        <taxon>Pseudomonadati</taxon>
        <taxon>Myxococcota</taxon>
        <taxon>Myxococcia</taxon>
        <taxon>Myxococcales</taxon>
        <taxon>Cystobacterineae</taxon>
        <taxon>Anaeromyxobacteraceae</taxon>
        <taxon>Anaeromyxobacter</taxon>
    </lineage>
</organism>
<feature type="chain" id="PRO_1000071381" description="Aspartyl/glutamyl-tRNA(Asn/Gln) amidotransferase subunit C">
    <location>
        <begin position="1"/>
        <end position="95"/>
    </location>
</feature>
<gene>
    <name evidence="1" type="primary">gatC</name>
    <name type="ordered locus">Anae109_4339</name>
</gene>